<proteinExistence type="inferred from homology"/>
<accession>P57014</accession>
<accession>A1ISA1</accession>
<keyword id="KW-0227">DNA damage</keyword>
<keyword id="KW-0234">DNA repair</keyword>
<keyword id="KW-0238">DNA-binding</keyword>
<keyword id="KW-0326">Glycosidase</keyword>
<keyword id="KW-0378">Hydrolase</keyword>
<keyword id="KW-0456">Lyase</keyword>
<keyword id="KW-0479">Metal-binding</keyword>
<keyword id="KW-0511">Multifunctional enzyme</keyword>
<keyword id="KW-0862">Zinc</keyword>
<keyword id="KW-0863">Zinc-finger</keyword>
<evidence type="ECO:0000250" key="1"/>
<evidence type="ECO:0000305" key="2"/>
<gene>
    <name type="primary">mutM</name>
    <name type="synonym">fpg</name>
    <name type="ordered locus">NMA1505</name>
</gene>
<protein>
    <recommendedName>
        <fullName>Formamidopyrimidine-DNA glycosylase</fullName>
        <shortName>Fapy-DNA glycosylase</shortName>
        <ecNumber>3.2.2.23</ecNumber>
    </recommendedName>
    <alternativeName>
        <fullName>DNA-(apurinic or apyrimidinic site) lyase MutM</fullName>
        <shortName>AP lyase MutM</shortName>
        <ecNumber>4.2.99.18</ecNumber>
    </alternativeName>
</protein>
<organism>
    <name type="scientific">Neisseria meningitidis serogroup A / serotype 4A (strain DSM 15465 / Z2491)</name>
    <dbReference type="NCBI Taxonomy" id="122587"/>
    <lineage>
        <taxon>Bacteria</taxon>
        <taxon>Pseudomonadati</taxon>
        <taxon>Pseudomonadota</taxon>
        <taxon>Betaproteobacteria</taxon>
        <taxon>Neisseriales</taxon>
        <taxon>Neisseriaceae</taxon>
        <taxon>Neisseria</taxon>
    </lineage>
</organism>
<feature type="initiator methionine" description="Removed" evidence="1">
    <location>
        <position position="1"/>
    </location>
</feature>
<feature type="chain" id="PRO_0000170842" description="Formamidopyrimidine-DNA glycosylase">
    <location>
        <begin position="2"/>
        <end position="275"/>
    </location>
</feature>
<feature type="zinc finger region" description="FPG-type">
    <location>
        <begin position="241"/>
        <end position="275"/>
    </location>
</feature>
<feature type="active site" description="Schiff-base intermediate with DNA" evidence="1">
    <location>
        <position position="2"/>
    </location>
</feature>
<feature type="active site" description="Proton donor" evidence="1">
    <location>
        <position position="3"/>
    </location>
</feature>
<feature type="active site" description="Proton donor; for beta-elimination activity" evidence="1">
    <location>
        <position position="58"/>
    </location>
</feature>
<feature type="active site" description="Proton donor; for delta-elimination activity" evidence="1">
    <location>
        <position position="265"/>
    </location>
</feature>
<feature type="binding site" evidence="1">
    <location>
        <position position="95"/>
    </location>
    <ligand>
        <name>DNA</name>
        <dbReference type="ChEBI" id="CHEBI:16991"/>
    </ligand>
</feature>
<feature type="binding site" evidence="1">
    <location>
        <position position="114"/>
    </location>
    <ligand>
        <name>DNA</name>
        <dbReference type="ChEBI" id="CHEBI:16991"/>
    </ligand>
</feature>
<sequence>MPELPEVETTLRGIAPHIEGKTVEAVVLRQLKLRWQINPDLGEILSGRQVLSCGRRAKYLIVRFQTGILLIHLGMSGSLRIFTPSDGRIGRSDRHDHVDIVFSDGTVMRYRDPRKFGAILWYEGIEEHHPLLEKLGPEPLSEAFCTDYLYVRLKAQKRAVKLALMDNAVVVGVGNIYANESLFRAGISPHRPANRLKKKECALLVETVKAVLRRAIETGGSTLRDFVDSDGKSGYFQQEYTVYGRHNQPCPQCGGLVVKETLGQRGTFYCPNCQK</sequence>
<dbReference type="EC" id="3.2.2.23"/>
<dbReference type="EC" id="4.2.99.18"/>
<dbReference type="EMBL" id="AL157959">
    <property type="protein sequence ID" value="CAM08656.1"/>
    <property type="molecule type" value="Genomic_DNA"/>
</dbReference>
<dbReference type="PIR" id="B81842">
    <property type="entry name" value="B81842"/>
</dbReference>
<dbReference type="RefSeq" id="WP_002245999.1">
    <property type="nucleotide sequence ID" value="NC_003116.1"/>
</dbReference>
<dbReference type="SMR" id="P57014"/>
<dbReference type="EnsemblBacteria" id="CAM08656">
    <property type="protein sequence ID" value="CAM08656"/>
    <property type="gene ID" value="NMA1505"/>
</dbReference>
<dbReference type="GeneID" id="93385904"/>
<dbReference type="KEGG" id="nma:NMA1505"/>
<dbReference type="HOGENOM" id="CLU_038423_1_1_4"/>
<dbReference type="Proteomes" id="UP000000626">
    <property type="component" value="Chromosome"/>
</dbReference>
<dbReference type="GO" id="GO:0034039">
    <property type="term" value="F:8-oxo-7,8-dihydroguanine DNA N-glycosylase activity"/>
    <property type="evidence" value="ECO:0007669"/>
    <property type="project" value="TreeGrafter"/>
</dbReference>
<dbReference type="GO" id="GO:0140078">
    <property type="term" value="F:class I DNA-(apurinic or apyrimidinic site) endonuclease activity"/>
    <property type="evidence" value="ECO:0007669"/>
    <property type="project" value="UniProtKB-EC"/>
</dbReference>
<dbReference type="GO" id="GO:0003684">
    <property type="term" value="F:damaged DNA binding"/>
    <property type="evidence" value="ECO:0007669"/>
    <property type="project" value="InterPro"/>
</dbReference>
<dbReference type="GO" id="GO:0008270">
    <property type="term" value="F:zinc ion binding"/>
    <property type="evidence" value="ECO:0007669"/>
    <property type="project" value="UniProtKB-UniRule"/>
</dbReference>
<dbReference type="GO" id="GO:0006284">
    <property type="term" value="P:base-excision repair"/>
    <property type="evidence" value="ECO:0007669"/>
    <property type="project" value="InterPro"/>
</dbReference>
<dbReference type="CDD" id="cd08966">
    <property type="entry name" value="EcFpg-like_N"/>
    <property type="match status" value="1"/>
</dbReference>
<dbReference type="FunFam" id="1.10.8.50:FF:000003">
    <property type="entry name" value="Formamidopyrimidine-DNA glycosylase"/>
    <property type="match status" value="1"/>
</dbReference>
<dbReference type="FunFam" id="3.20.190.10:FF:000001">
    <property type="entry name" value="Formamidopyrimidine-DNA glycosylase"/>
    <property type="match status" value="1"/>
</dbReference>
<dbReference type="Gene3D" id="1.10.8.50">
    <property type="match status" value="1"/>
</dbReference>
<dbReference type="Gene3D" id="3.20.190.10">
    <property type="entry name" value="MutM-like, N-terminal"/>
    <property type="match status" value="1"/>
</dbReference>
<dbReference type="HAMAP" id="MF_00103">
    <property type="entry name" value="Fapy_DNA_glycosyl"/>
    <property type="match status" value="1"/>
</dbReference>
<dbReference type="InterPro" id="IPR015886">
    <property type="entry name" value="DNA_glyclase/AP_lyase_DNA-bd"/>
</dbReference>
<dbReference type="InterPro" id="IPR015887">
    <property type="entry name" value="DNA_glyclase_Znf_dom_DNA_BS"/>
</dbReference>
<dbReference type="InterPro" id="IPR020629">
    <property type="entry name" value="Formamido-pyr_DNA_Glyclase"/>
</dbReference>
<dbReference type="InterPro" id="IPR012319">
    <property type="entry name" value="FPG_cat"/>
</dbReference>
<dbReference type="InterPro" id="IPR035937">
    <property type="entry name" value="MutM-like_N-ter"/>
</dbReference>
<dbReference type="InterPro" id="IPR010979">
    <property type="entry name" value="Ribosomal_uS13-like_H2TH"/>
</dbReference>
<dbReference type="InterPro" id="IPR000214">
    <property type="entry name" value="Znf_DNA_glyclase/AP_lyase"/>
</dbReference>
<dbReference type="InterPro" id="IPR010663">
    <property type="entry name" value="Znf_FPG/IleRS"/>
</dbReference>
<dbReference type="NCBIfam" id="TIGR00577">
    <property type="entry name" value="fpg"/>
    <property type="match status" value="1"/>
</dbReference>
<dbReference type="NCBIfam" id="NF002211">
    <property type="entry name" value="PRK01103.1"/>
    <property type="match status" value="1"/>
</dbReference>
<dbReference type="PANTHER" id="PTHR22993">
    <property type="entry name" value="FORMAMIDOPYRIMIDINE-DNA GLYCOSYLASE"/>
    <property type="match status" value="1"/>
</dbReference>
<dbReference type="PANTHER" id="PTHR22993:SF9">
    <property type="entry name" value="FORMAMIDOPYRIMIDINE-DNA GLYCOSYLASE"/>
    <property type="match status" value="1"/>
</dbReference>
<dbReference type="Pfam" id="PF01149">
    <property type="entry name" value="Fapy_DNA_glyco"/>
    <property type="match status" value="1"/>
</dbReference>
<dbReference type="Pfam" id="PF06831">
    <property type="entry name" value="H2TH"/>
    <property type="match status" value="1"/>
</dbReference>
<dbReference type="Pfam" id="PF06827">
    <property type="entry name" value="zf-FPG_IleRS"/>
    <property type="match status" value="1"/>
</dbReference>
<dbReference type="SMART" id="SM00898">
    <property type="entry name" value="Fapy_DNA_glyco"/>
    <property type="match status" value="1"/>
</dbReference>
<dbReference type="SMART" id="SM01232">
    <property type="entry name" value="H2TH"/>
    <property type="match status" value="1"/>
</dbReference>
<dbReference type="SUPFAM" id="SSF57716">
    <property type="entry name" value="Glucocorticoid receptor-like (DNA-binding domain)"/>
    <property type="match status" value="1"/>
</dbReference>
<dbReference type="SUPFAM" id="SSF81624">
    <property type="entry name" value="N-terminal domain of MutM-like DNA repair proteins"/>
    <property type="match status" value="1"/>
</dbReference>
<dbReference type="SUPFAM" id="SSF46946">
    <property type="entry name" value="S13-like H2TH domain"/>
    <property type="match status" value="1"/>
</dbReference>
<dbReference type="PROSITE" id="PS51068">
    <property type="entry name" value="FPG_CAT"/>
    <property type="match status" value="1"/>
</dbReference>
<dbReference type="PROSITE" id="PS01242">
    <property type="entry name" value="ZF_FPG_1"/>
    <property type="match status" value="1"/>
</dbReference>
<dbReference type="PROSITE" id="PS51066">
    <property type="entry name" value="ZF_FPG_2"/>
    <property type="match status" value="1"/>
</dbReference>
<reference key="1">
    <citation type="journal article" date="2000" name="Nature">
        <title>Complete DNA sequence of a serogroup A strain of Neisseria meningitidis Z2491.</title>
        <authorList>
            <person name="Parkhill J."/>
            <person name="Achtman M."/>
            <person name="James K.D."/>
            <person name="Bentley S.D."/>
            <person name="Churcher C.M."/>
            <person name="Klee S.R."/>
            <person name="Morelli G."/>
            <person name="Basham D."/>
            <person name="Brown D."/>
            <person name="Chillingworth T."/>
            <person name="Davies R.M."/>
            <person name="Davis P."/>
            <person name="Devlin K."/>
            <person name="Feltwell T."/>
            <person name="Hamlin N."/>
            <person name="Holroyd S."/>
            <person name="Jagels K."/>
            <person name="Leather S."/>
            <person name="Moule S."/>
            <person name="Mungall K.L."/>
            <person name="Quail M.A."/>
            <person name="Rajandream M.A."/>
            <person name="Rutherford K.M."/>
            <person name="Simmonds M."/>
            <person name="Skelton J."/>
            <person name="Whitehead S."/>
            <person name="Spratt B.G."/>
            <person name="Barrell B.G."/>
        </authorList>
    </citation>
    <scope>NUCLEOTIDE SEQUENCE [LARGE SCALE GENOMIC DNA]</scope>
    <source>
        <strain>DSM 15465 / Z2491</strain>
    </source>
</reference>
<comment type="function">
    <text evidence="1">Involved in base excision repair of DNA damaged by oxidation or by mutagenic agents. Acts as a DNA glycosylase that recognizes and removes damaged bases. Has a preference for oxidized purines, such as 7,8-dihydro-8-oxoguanine (8-oxoG). Has AP (apurinic/apyrimidinic) lyase activity and introduces nicks in the DNA strand. Cleaves the DNA backbone by beta-delta elimination to generate a single-strand break at the site of the removed base with both 3'- and 5'-phosphates (By similarity).</text>
</comment>
<comment type="catalytic activity">
    <reaction>
        <text>Hydrolysis of DNA containing ring-opened 7-methylguanine residues, releasing 2,6-diamino-4-hydroxy-5-(N-methyl)formamidopyrimidine.</text>
        <dbReference type="EC" id="3.2.2.23"/>
    </reaction>
</comment>
<comment type="catalytic activity">
    <reaction>
        <text>2'-deoxyribonucleotide-(2'-deoxyribose 5'-phosphate)-2'-deoxyribonucleotide-DNA = a 3'-end 2'-deoxyribonucleotide-(2,3-dehydro-2,3-deoxyribose 5'-phosphate)-DNA + a 5'-end 5'-phospho-2'-deoxyribonucleoside-DNA + H(+)</text>
        <dbReference type="Rhea" id="RHEA:66592"/>
        <dbReference type="Rhea" id="RHEA-COMP:13180"/>
        <dbReference type="Rhea" id="RHEA-COMP:16897"/>
        <dbReference type="Rhea" id="RHEA-COMP:17067"/>
        <dbReference type="ChEBI" id="CHEBI:15378"/>
        <dbReference type="ChEBI" id="CHEBI:136412"/>
        <dbReference type="ChEBI" id="CHEBI:157695"/>
        <dbReference type="ChEBI" id="CHEBI:167181"/>
        <dbReference type="EC" id="4.2.99.18"/>
    </reaction>
</comment>
<comment type="cofactor">
    <cofactor evidence="1">
        <name>Zn(2+)</name>
        <dbReference type="ChEBI" id="CHEBI:29105"/>
    </cofactor>
    <text evidence="1">Binds 1 zinc ion per subunit.</text>
</comment>
<comment type="subunit">
    <text evidence="1">Monomer.</text>
</comment>
<comment type="similarity">
    <text evidence="2">Belongs to the FPG family.</text>
</comment>
<name>FPG_NEIMA</name>